<name>RL31_RICFE</name>
<evidence type="ECO:0000250" key="1"/>
<evidence type="ECO:0000305" key="2"/>
<sequence length="78" mass="8793">MKSGIHPEYKKFLIKVESDVFETMSTHPTGEILMDVDFRKHPAWNKDSGNVVNQSNKSVSDFNKRFSGLSFGGKKEAS</sequence>
<keyword id="KW-0687">Ribonucleoprotein</keyword>
<keyword id="KW-0689">Ribosomal protein</keyword>
<keyword id="KW-0694">RNA-binding</keyword>
<keyword id="KW-0699">rRNA-binding</keyword>
<gene>
    <name type="primary">rpmE</name>
    <name type="ordered locus">RF_0084</name>
</gene>
<protein>
    <recommendedName>
        <fullName evidence="2">Large ribosomal subunit protein bL31</fullName>
    </recommendedName>
    <alternativeName>
        <fullName>50S ribosomal protein L31</fullName>
    </alternativeName>
</protein>
<reference key="1">
    <citation type="journal article" date="2005" name="PLoS Biol.">
        <title>The genome sequence of Rickettsia felis identifies the first putative conjugative plasmid in an obligate intracellular parasite.</title>
        <authorList>
            <person name="Ogata H."/>
            <person name="Renesto P."/>
            <person name="Audic S."/>
            <person name="Robert C."/>
            <person name="Blanc G."/>
            <person name="Fournier P.-E."/>
            <person name="Parinello H."/>
            <person name="Claverie J.-M."/>
            <person name="Raoult D."/>
        </authorList>
    </citation>
    <scope>NUCLEOTIDE SEQUENCE [LARGE SCALE GENOMIC DNA]</scope>
    <source>
        <strain>ATCC VR-1525 / URRWXCal2</strain>
    </source>
</reference>
<proteinExistence type="inferred from homology"/>
<organism>
    <name type="scientific">Rickettsia felis (strain ATCC VR-1525 / URRWXCal2)</name>
    <name type="common">Rickettsia azadi</name>
    <dbReference type="NCBI Taxonomy" id="315456"/>
    <lineage>
        <taxon>Bacteria</taxon>
        <taxon>Pseudomonadati</taxon>
        <taxon>Pseudomonadota</taxon>
        <taxon>Alphaproteobacteria</taxon>
        <taxon>Rickettsiales</taxon>
        <taxon>Rickettsiaceae</taxon>
        <taxon>Rickettsieae</taxon>
        <taxon>Rickettsia</taxon>
        <taxon>spotted fever group</taxon>
    </lineage>
</organism>
<comment type="function">
    <text evidence="1">Binds the 23S rRNA.</text>
</comment>
<comment type="subunit">
    <text evidence="1">Part of the 50S ribosomal subunit.</text>
</comment>
<comment type="similarity">
    <text evidence="2">Belongs to the bacterial ribosomal protein bL31 family. Type A subfamily.</text>
</comment>
<accession>Q4UNC3</accession>
<feature type="chain" id="PRO_0000259222" description="Large ribosomal subunit protein bL31">
    <location>
        <begin position="1"/>
        <end position="78"/>
    </location>
</feature>
<dbReference type="EMBL" id="CP000053">
    <property type="protein sequence ID" value="AAY60935.1"/>
    <property type="molecule type" value="Genomic_DNA"/>
</dbReference>
<dbReference type="SMR" id="Q4UNC3"/>
<dbReference type="STRING" id="315456.RF_0084"/>
<dbReference type="KEGG" id="rfe:RF_0084"/>
<dbReference type="eggNOG" id="COG0254">
    <property type="taxonomic scope" value="Bacteria"/>
</dbReference>
<dbReference type="HOGENOM" id="CLU_114306_3_1_5"/>
<dbReference type="OrthoDB" id="9803251at2"/>
<dbReference type="Proteomes" id="UP000008548">
    <property type="component" value="Chromosome"/>
</dbReference>
<dbReference type="GO" id="GO:1990904">
    <property type="term" value="C:ribonucleoprotein complex"/>
    <property type="evidence" value="ECO:0007669"/>
    <property type="project" value="UniProtKB-KW"/>
</dbReference>
<dbReference type="GO" id="GO:0005840">
    <property type="term" value="C:ribosome"/>
    <property type="evidence" value="ECO:0007669"/>
    <property type="project" value="UniProtKB-KW"/>
</dbReference>
<dbReference type="GO" id="GO:0019843">
    <property type="term" value="F:rRNA binding"/>
    <property type="evidence" value="ECO:0007669"/>
    <property type="project" value="UniProtKB-KW"/>
</dbReference>
<dbReference type="GO" id="GO:0003735">
    <property type="term" value="F:structural constituent of ribosome"/>
    <property type="evidence" value="ECO:0007669"/>
    <property type="project" value="InterPro"/>
</dbReference>
<dbReference type="GO" id="GO:0006412">
    <property type="term" value="P:translation"/>
    <property type="evidence" value="ECO:0007669"/>
    <property type="project" value="InterPro"/>
</dbReference>
<dbReference type="Gene3D" id="4.10.830.30">
    <property type="entry name" value="Ribosomal protein L31"/>
    <property type="match status" value="1"/>
</dbReference>
<dbReference type="InterPro" id="IPR034704">
    <property type="entry name" value="Ribosomal_bL28/bL31-like_sf"/>
</dbReference>
<dbReference type="InterPro" id="IPR002150">
    <property type="entry name" value="Ribosomal_bL31"/>
</dbReference>
<dbReference type="InterPro" id="IPR042105">
    <property type="entry name" value="Ribosomal_bL31_sf"/>
</dbReference>
<dbReference type="NCBIfam" id="TIGR00105">
    <property type="entry name" value="L31"/>
    <property type="match status" value="1"/>
</dbReference>
<dbReference type="Pfam" id="PF01197">
    <property type="entry name" value="Ribosomal_L31"/>
    <property type="match status" value="1"/>
</dbReference>
<dbReference type="SUPFAM" id="SSF143800">
    <property type="entry name" value="L28p-like"/>
    <property type="match status" value="1"/>
</dbReference>
<dbReference type="PROSITE" id="PS01143">
    <property type="entry name" value="RIBOSOMAL_L31"/>
    <property type="match status" value="1"/>
</dbReference>